<evidence type="ECO:0000255" key="1">
    <source>
        <dbReference type="HAMAP-Rule" id="MF_01306"/>
    </source>
</evidence>
<evidence type="ECO:0000305" key="2"/>
<name>RS4_MYCLB</name>
<dbReference type="EMBL" id="FM211192">
    <property type="protein sequence ID" value="CAR72055.1"/>
    <property type="molecule type" value="Genomic_DNA"/>
</dbReference>
<dbReference type="SMR" id="B8ZSH7"/>
<dbReference type="KEGG" id="mlb:MLBr01958"/>
<dbReference type="HOGENOM" id="CLU_092403_0_2_11"/>
<dbReference type="Proteomes" id="UP000006900">
    <property type="component" value="Chromosome"/>
</dbReference>
<dbReference type="GO" id="GO:0015935">
    <property type="term" value="C:small ribosomal subunit"/>
    <property type="evidence" value="ECO:0007669"/>
    <property type="project" value="InterPro"/>
</dbReference>
<dbReference type="GO" id="GO:0019843">
    <property type="term" value="F:rRNA binding"/>
    <property type="evidence" value="ECO:0007669"/>
    <property type="project" value="UniProtKB-UniRule"/>
</dbReference>
<dbReference type="GO" id="GO:0003735">
    <property type="term" value="F:structural constituent of ribosome"/>
    <property type="evidence" value="ECO:0007669"/>
    <property type="project" value="InterPro"/>
</dbReference>
<dbReference type="GO" id="GO:0042274">
    <property type="term" value="P:ribosomal small subunit biogenesis"/>
    <property type="evidence" value="ECO:0007669"/>
    <property type="project" value="TreeGrafter"/>
</dbReference>
<dbReference type="GO" id="GO:0006412">
    <property type="term" value="P:translation"/>
    <property type="evidence" value="ECO:0007669"/>
    <property type="project" value="UniProtKB-UniRule"/>
</dbReference>
<dbReference type="CDD" id="cd00165">
    <property type="entry name" value="S4"/>
    <property type="match status" value="1"/>
</dbReference>
<dbReference type="FunFam" id="3.10.290.10:FF:000001">
    <property type="entry name" value="30S ribosomal protein S4"/>
    <property type="match status" value="1"/>
</dbReference>
<dbReference type="Gene3D" id="1.10.1050.10">
    <property type="entry name" value="Ribosomal Protein S4 Delta 41, Chain A, domain 1"/>
    <property type="match status" value="1"/>
</dbReference>
<dbReference type="Gene3D" id="3.10.290.10">
    <property type="entry name" value="RNA-binding S4 domain"/>
    <property type="match status" value="1"/>
</dbReference>
<dbReference type="HAMAP" id="MF_01306_B">
    <property type="entry name" value="Ribosomal_uS4_B"/>
    <property type="match status" value="1"/>
</dbReference>
<dbReference type="InterPro" id="IPR022801">
    <property type="entry name" value="Ribosomal_uS4"/>
</dbReference>
<dbReference type="InterPro" id="IPR005709">
    <property type="entry name" value="Ribosomal_uS4_bac-type"/>
</dbReference>
<dbReference type="InterPro" id="IPR018079">
    <property type="entry name" value="Ribosomal_uS4_CS"/>
</dbReference>
<dbReference type="InterPro" id="IPR001912">
    <property type="entry name" value="Ribosomal_uS4_N"/>
</dbReference>
<dbReference type="InterPro" id="IPR002942">
    <property type="entry name" value="S4_RNA-bd"/>
</dbReference>
<dbReference type="InterPro" id="IPR036986">
    <property type="entry name" value="S4_RNA-bd_sf"/>
</dbReference>
<dbReference type="NCBIfam" id="NF003717">
    <property type="entry name" value="PRK05327.1"/>
    <property type="match status" value="1"/>
</dbReference>
<dbReference type="NCBIfam" id="TIGR01017">
    <property type="entry name" value="rpsD_bact"/>
    <property type="match status" value="1"/>
</dbReference>
<dbReference type="PANTHER" id="PTHR11831">
    <property type="entry name" value="30S 40S RIBOSOMAL PROTEIN"/>
    <property type="match status" value="1"/>
</dbReference>
<dbReference type="PANTHER" id="PTHR11831:SF4">
    <property type="entry name" value="SMALL RIBOSOMAL SUBUNIT PROTEIN US4M"/>
    <property type="match status" value="1"/>
</dbReference>
<dbReference type="Pfam" id="PF00163">
    <property type="entry name" value="Ribosomal_S4"/>
    <property type="match status" value="1"/>
</dbReference>
<dbReference type="Pfam" id="PF01479">
    <property type="entry name" value="S4"/>
    <property type="match status" value="1"/>
</dbReference>
<dbReference type="SMART" id="SM01390">
    <property type="entry name" value="Ribosomal_S4"/>
    <property type="match status" value="1"/>
</dbReference>
<dbReference type="SMART" id="SM00363">
    <property type="entry name" value="S4"/>
    <property type="match status" value="1"/>
</dbReference>
<dbReference type="SUPFAM" id="SSF55174">
    <property type="entry name" value="Alpha-L RNA-binding motif"/>
    <property type="match status" value="1"/>
</dbReference>
<dbReference type="PROSITE" id="PS00632">
    <property type="entry name" value="RIBOSOMAL_S4"/>
    <property type="match status" value="1"/>
</dbReference>
<dbReference type="PROSITE" id="PS50889">
    <property type="entry name" value="S4"/>
    <property type="match status" value="1"/>
</dbReference>
<comment type="function">
    <text evidence="1">One of the primary rRNA binding proteins, it binds directly to 16S rRNA where it nucleates assembly of the body of the 30S subunit.</text>
</comment>
<comment type="function">
    <text evidence="1">With S5 and S12 plays an important role in translational accuracy.</text>
</comment>
<comment type="subunit">
    <text evidence="1">Part of the 30S ribosomal subunit. Contacts protein S5. The interaction surface between S4 and S5 is involved in control of translational fidelity.</text>
</comment>
<comment type="similarity">
    <text evidence="1">Belongs to the universal ribosomal protein uS4 family.</text>
</comment>
<protein>
    <recommendedName>
        <fullName evidence="1">Small ribosomal subunit protein uS4</fullName>
    </recommendedName>
    <alternativeName>
        <fullName evidence="2">30S ribosomal protein S4</fullName>
    </alternativeName>
</protein>
<proteinExistence type="inferred from homology"/>
<keyword id="KW-0687">Ribonucleoprotein</keyword>
<keyword id="KW-0689">Ribosomal protein</keyword>
<keyword id="KW-0694">RNA-binding</keyword>
<keyword id="KW-0699">rRNA-binding</keyword>
<accession>B8ZSH7</accession>
<gene>
    <name evidence="1" type="primary">rpsD</name>
    <name type="ordered locus">MLBr01958</name>
</gene>
<organism>
    <name type="scientific">Mycobacterium leprae (strain Br4923)</name>
    <dbReference type="NCBI Taxonomy" id="561304"/>
    <lineage>
        <taxon>Bacteria</taxon>
        <taxon>Bacillati</taxon>
        <taxon>Actinomycetota</taxon>
        <taxon>Actinomycetes</taxon>
        <taxon>Mycobacteriales</taxon>
        <taxon>Mycobacteriaceae</taxon>
        <taxon>Mycobacterium</taxon>
    </lineage>
</organism>
<sequence>MARYTGPITRKSRRLRIDLVGGDQAFEKRPYPPGQHGRARIKESEYLLQLQEKQKARFTYGVMEKQFRRYYEEAVRQPGKTGEELLKILESRLDNVIYRAGLARTRRMARQLVSHGHFSVNGVHVNVPSYRVSQYDIIDIRDKSLDTVPFQIARETVGDRPIPSWLQVVGEHQRILIHQLPERVQIEVPLIEQLIVEYYSK</sequence>
<reference key="1">
    <citation type="journal article" date="2009" name="Nat. Genet.">
        <title>Comparative genomic and phylogeographic analysis of Mycobacterium leprae.</title>
        <authorList>
            <person name="Monot M."/>
            <person name="Honore N."/>
            <person name="Garnier T."/>
            <person name="Zidane N."/>
            <person name="Sherafi D."/>
            <person name="Paniz-Mondolfi A."/>
            <person name="Matsuoka M."/>
            <person name="Taylor G.M."/>
            <person name="Donoghue H.D."/>
            <person name="Bouwman A."/>
            <person name="Mays S."/>
            <person name="Watson C."/>
            <person name="Lockwood D."/>
            <person name="Khamispour A."/>
            <person name="Dowlati Y."/>
            <person name="Jianping S."/>
            <person name="Rea T.H."/>
            <person name="Vera-Cabrera L."/>
            <person name="Stefani M.M."/>
            <person name="Banu S."/>
            <person name="Macdonald M."/>
            <person name="Sapkota B.R."/>
            <person name="Spencer J.S."/>
            <person name="Thomas J."/>
            <person name="Harshman K."/>
            <person name="Singh P."/>
            <person name="Busso P."/>
            <person name="Gattiker A."/>
            <person name="Rougemont J."/>
            <person name="Brennan P.J."/>
            <person name="Cole S.T."/>
        </authorList>
    </citation>
    <scope>NUCLEOTIDE SEQUENCE [LARGE SCALE GENOMIC DNA]</scope>
    <source>
        <strain>Br4923</strain>
    </source>
</reference>
<feature type="chain" id="PRO_1000165415" description="Small ribosomal subunit protein uS4">
    <location>
        <begin position="1"/>
        <end position="201"/>
    </location>
</feature>
<feature type="domain" description="S4 RNA-binding" evidence="1">
    <location>
        <begin position="91"/>
        <end position="157"/>
    </location>
</feature>